<sequence>MNAHNMRGPPGDLAKVVPGSRSGWNEGSRCRQADKGDGQCRNGGRDASEHVEARALFLNSNISSKARFSLRTPRVVPSSRCRRRRADAEARRRTAHARHDTNLRTGERCPNESPLLAAILADATNLGLSRRAAASQGVTATNSPGRRMPLSGSFHPIAHKQLVAAAYASNAVSMDGDIQQDNLNGFLTSEPAARGCGQGRRLASSRPCMMASFHRNQSFARAHRRPTPTRPD</sequence>
<organism>
    <name type="scientific">Rhizobium meliloti</name>
    <name type="common">Ensifer meliloti</name>
    <name type="synonym">Sinorhizobium meliloti</name>
    <dbReference type="NCBI Taxonomy" id="382"/>
    <lineage>
        <taxon>Bacteria</taxon>
        <taxon>Pseudomonadati</taxon>
        <taxon>Pseudomonadota</taxon>
        <taxon>Alphaproteobacteria</taxon>
        <taxon>Hyphomicrobiales</taxon>
        <taxon>Rhizobiaceae</taxon>
        <taxon>Sinorhizobium/Ensifer group</taxon>
        <taxon>Sinorhizobium</taxon>
    </lineage>
</organism>
<protein>
    <recommendedName>
        <fullName>Uncharacterized protein ORF7 in nfe locus</fullName>
    </recommendedName>
    <alternativeName>
        <fullName>ORFB</fullName>
    </alternativeName>
</protein>
<keyword id="KW-0614">Plasmid</keyword>
<evidence type="ECO:0000256" key="1">
    <source>
        <dbReference type="SAM" id="MobiDB-lite"/>
    </source>
</evidence>
<name>YNF7_RHIML</name>
<reference key="1">
    <citation type="journal article" date="1993" name="J. Mol. Biol.">
        <title>Nucleotide sequence and characterization of Rhizobium meliloti nodulation competitiveness genes nfe.</title>
        <authorList>
            <person name="Soto M.J."/>
            <person name="Zorzano A."/>
            <person name="Mercado-Blanco J."/>
            <person name="Lepek V."/>
            <person name="Olivares J."/>
            <person name="Toro N."/>
        </authorList>
    </citation>
    <scope>NUCLEOTIDE SEQUENCE [GENOMIC DNA]</scope>
    <source>
        <strain>GR4</strain>
    </source>
</reference>
<dbReference type="EMBL" id="X66124">
    <property type="protein sequence ID" value="CAA46913.1"/>
    <property type="molecule type" value="Genomic_DNA"/>
</dbReference>
<dbReference type="PIR" id="S35087">
    <property type="entry name" value="S24944"/>
</dbReference>
<dbReference type="SMR" id="Q52992"/>
<accession>Q52992</accession>
<feature type="chain" id="PRO_0000160652" description="Uncharacterized protein ORF7 in nfe locus">
    <location>
        <begin position="1"/>
        <end position="232"/>
    </location>
</feature>
<feature type="region of interest" description="Disordered" evidence="1">
    <location>
        <begin position="1"/>
        <end position="46"/>
    </location>
</feature>
<feature type="compositionally biased region" description="Basic and acidic residues" evidence="1">
    <location>
        <begin position="28"/>
        <end position="46"/>
    </location>
</feature>
<geneLocation type="plasmid">
    <name>pRmeGR4b</name>
</geneLocation>
<proteinExistence type="predicted"/>